<gene>
    <name evidence="11" type="primary">Rho1</name>
    <name evidence="11" type="ORF">CG8416</name>
</gene>
<reference key="1">
    <citation type="journal article" date="1995" name="EMBO J.">
        <title>Characterization of rho GTPase family homologues in Drosophila melanogaster: overexpressing Rho1 in retinal cells causes a late developmental defect.</title>
        <authorList>
            <person name="Hariharan I.K."/>
            <person name="Hu K.-Q."/>
            <person name="Asha H."/>
            <person name="Quintanilla A."/>
            <person name="Ezzell R.M."/>
            <person name="Settleman J."/>
        </authorList>
    </citation>
    <scope>NUCLEOTIDE SEQUENCE [MRNA]</scope>
    <scope>FUNCTION</scope>
</reference>
<reference key="2">
    <citation type="journal article" date="1999" name="Development">
        <title>Mutations in the Rho1 small GTPase disrupt morphogenesis and segmentation during early Drosophila development.</title>
        <authorList>
            <person name="Magie C.R."/>
            <person name="Meyer M.R."/>
            <person name="Gorsuch M.S."/>
            <person name="Parkhurst S.M."/>
        </authorList>
    </citation>
    <scope>NUCLEOTIDE SEQUENCE [GENOMIC DNA / MRNA]</scope>
    <scope>FUNCTION</scope>
    <scope>INTERACTION WITH CAPU</scope>
    <scope>DISRUPTION PHENOTYPE</scope>
</reference>
<reference key="3">
    <citation type="journal article" date="2000" name="Science">
        <title>The genome sequence of Drosophila melanogaster.</title>
        <authorList>
            <person name="Adams M.D."/>
            <person name="Celniker S.E."/>
            <person name="Holt R.A."/>
            <person name="Evans C.A."/>
            <person name="Gocayne J.D."/>
            <person name="Amanatides P.G."/>
            <person name="Scherer S.E."/>
            <person name="Li P.W."/>
            <person name="Hoskins R.A."/>
            <person name="Galle R.F."/>
            <person name="George R.A."/>
            <person name="Lewis S.E."/>
            <person name="Richards S."/>
            <person name="Ashburner M."/>
            <person name="Henderson S.N."/>
            <person name="Sutton G.G."/>
            <person name="Wortman J.R."/>
            <person name="Yandell M.D."/>
            <person name="Zhang Q."/>
            <person name="Chen L.X."/>
            <person name="Brandon R.C."/>
            <person name="Rogers Y.-H.C."/>
            <person name="Blazej R.G."/>
            <person name="Champe M."/>
            <person name="Pfeiffer B.D."/>
            <person name="Wan K.H."/>
            <person name="Doyle C."/>
            <person name="Baxter E.G."/>
            <person name="Helt G."/>
            <person name="Nelson C.R."/>
            <person name="Miklos G.L.G."/>
            <person name="Abril J.F."/>
            <person name="Agbayani A."/>
            <person name="An H.-J."/>
            <person name="Andrews-Pfannkoch C."/>
            <person name="Baldwin D."/>
            <person name="Ballew R.M."/>
            <person name="Basu A."/>
            <person name="Baxendale J."/>
            <person name="Bayraktaroglu L."/>
            <person name="Beasley E.M."/>
            <person name="Beeson K.Y."/>
            <person name="Benos P.V."/>
            <person name="Berman B.P."/>
            <person name="Bhandari D."/>
            <person name="Bolshakov S."/>
            <person name="Borkova D."/>
            <person name="Botchan M.R."/>
            <person name="Bouck J."/>
            <person name="Brokstein P."/>
            <person name="Brottier P."/>
            <person name="Burtis K.C."/>
            <person name="Busam D.A."/>
            <person name="Butler H."/>
            <person name="Cadieu E."/>
            <person name="Center A."/>
            <person name="Chandra I."/>
            <person name="Cherry J.M."/>
            <person name="Cawley S."/>
            <person name="Dahlke C."/>
            <person name="Davenport L.B."/>
            <person name="Davies P."/>
            <person name="de Pablos B."/>
            <person name="Delcher A."/>
            <person name="Deng Z."/>
            <person name="Mays A.D."/>
            <person name="Dew I."/>
            <person name="Dietz S.M."/>
            <person name="Dodson K."/>
            <person name="Doup L.E."/>
            <person name="Downes M."/>
            <person name="Dugan-Rocha S."/>
            <person name="Dunkov B.C."/>
            <person name="Dunn P."/>
            <person name="Durbin K.J."/>
            <person name="Evangelista C.C."/>
            <person name="Ferraz C."/>
            <person name="Ferriera S."/>
            <person name="Fleischmann W."/>
            <person name="Fosler C."/>
            <person name="Gabrielian A.E."/>
            <person name="Garg N.S."/>
            <person name="Gelbart W.M."/>
            <person name="Glasser K."/>
            <person name="Glodek A."/>
            <person name="Gong F."/>
            <person name="Gorrell J.H."/>
            <person name="Gu Z."/>
            <person name="Guan P."/>
            <person name="Harris M."/>
            <person name="Harris N.L."/>
            <person name="Harvey D.A."/>
            <person name="Heiman T.J."/>
            <person name="Hernandez J.R."/>
            <person name="Houck J."/>
            <person name="Hostin D."/>
            <person name="Houston K.A."/>
            <person name="Howland T.J."/>
            <person name="Wei M.-H."/>
            <person name="Ibegwam C."/>
            <person name="Jalali M."/>
            <person name="Kalush F."/>
            <person name="Karpen G.H."/>
            <person name="Ke Z."/>
            <person name="Kennison J.A."/>
            <person name="Ketchum K.A."/>
            <person name="Kimmel B.E."/>
            <person name="Kodira C.D."/>
            <person name="Kraft C.L."/>
            <person name="Kravitz S."/>
            <person name="Kulp D."/>
            <person name="Lai Z."/>
            <person name="Lasko P."/>
            <person name="Lei Y."/>
            <person name="Levitsky A.A."/>
            <person name="Li J.H."/>
            <person name="Li Z."/>
            <person name="Liang Y."/>
            <person name="Lin X."/>
            <person name="Liu X."/>
            <person name="Mattei B."/>
            <person name="McIntosh T.C."/>
            <person name="McLeod M.P."/>
            <person name="McPherson D."/>
            <person name="Merkulov G."/>
            <person name="Milshina N.V."/>
            <person name="Mobarry C."/>
            <person name="Morris J."/>
            <person name="Moshrefi A."/>
            <person name="Mount S.M."/>
            <person name="Moy M."/>
            <person name="Murphy B."/>
            <person name="Murphy L."/>
            <person name="Muzny D.M."/>
            <person name="Nelson D.L."/>
            <person name="Nelson D.R."/>
            <person name="Nelson K.A."/>
            <person name="Nixon K."/>
            <person name="Nusskern D.R."/>
            <person name="Pacleb J.M."/>
            <person name="Palazzolo M."/>
            <person name="Pittman G.S."/>
            <person name="Pan S."/>
            <person name="Pollard J."/>
            <person name="Puri V."/>
            <person name="Reese M.G."/>
            <person name="Reinert K."/>
            <person name="Remington K."/>
            <person name="Saunders R.D.C."/>
            <person name="Scheeler F."/>
            <person name="Shen H."/>
            <person name="Shue B.C."/>
            <person name="Siden-Kiamos I."/>
            <person name="Simpson M."/>
            <person name="Skupski M.P."/>
            <person name="Smith T.J."/>
            <person name="Spier E."/>
            <person name="Spradling A.C."/>
            <person name="Stapleton M."/>
            <person name="Strong R."/>
            <person name="Sun E."/>
            <person name="Svirskas R."/>
            <person name="Tector C."/>
            <person name="Turner R."/>
            <person name="Venter E."/>
            <person name="Wang A.H."/>
            <person name="Wang X."/>
            <person name="Wang Z.-Y."/>
            <person name="Wassarman D.A."/>
            <person name="Weinstock G.M."/>
            <person name="Weissenbach J."/>
            <person name="Williams S.M."/>
            <person name="Woodage T."/>
            <person name="Worley K.C."/>
            <person name="Wu D."/>
            <person name="Yang S."/>
            <person name="Yao Q.A."/>
            <person name="Ye J."/>
            <person name="Yeh R.-F."/>
            <person name="Zaveri J.S."/>
            <person name="Zhan M."/>
            <person name="Zhang G."/>
            <person name="Zhao Q."/>
            <person name="Zheng L."/>
            <person name="Zheng X.H."/>
            <person name="Zhong F.N."/>
            <person name="Zhong W."/>
            <person name="Zhou X."/>
            <person name="Zhu S.C."/>
            <person name="Zhu X."/>
            <person name="Smith H.O."/>
            <person name="Gibbs R.A."/>
            <person name="Myers E.W."/>
            <person name="Rubin G.M."/>
            <person name="Venter J.C."/>
        </authorList>
    </citation>
    <scope>NUCLEOTIDE SEQUENCE [LARGE SCALE GENOMIC DNA]</scope>
    <source>
        <strain>Berkeley</strain>
    </source>
</reference>
<reference key="4">
    <citation type="journal article" date="2002" name="Genome Biol.">
        <title>Annotation of the Drosophila melanogaster euchromatic genome: a systematic review.</title>
        <authorList>
            <person name="Misra S."/>
            <person name="Crosby M.A."/>
            <person name="Mungall C.J."/>
            <person name="Matthews B.B."/>
            <person name="Campbell K.S."/>
            <person name="Hradecky P."/>
            <person name="Huang Y."/>
            <person name="Kaminker J.S."/>
            <person name="Millburn G.H."/>
            <person name="Prochnik S.E."/>
            <person name="Smith C.D."/>
            <person name="Tupy J.L."/>
            <person name="Whitfield E.J."/>
            <person name="Bayraktaroglu L."/>
            <person name="Berman B.P."/>
            <person name="Bettencourt B.R."/>
            <person name="Celniker S.E."/>
            <person name="de Grey A.D.N.J."/>
            <person name="Drysdale R.A."/>
            <person name="Harris N.L."/>
            <person name="Richter J."/>
            <person name="Russo S."/>
            <person name="Schroeder A.J."/>
            <person name="Shu S.Q."/>
            <person name="Stapleton M."/>
            <person name="Yamada C."/>
            <person name="Ashburner M."/>
            <person name="Gelbart W.M."/>
            <person name="Rubin G.M."/>
            <person name="Lewis S.E."/>
        </authorList>
    </citation>
    <scope>GENOME REANNOTATION</scope>
    <source>
        <strain>Berkeley</strain>
    </source>
</reference>
<reference key="5">
    <citation type="journal article" date="2002" name="Genome Biol.">
        <title>A Drosophila full-length cDNA resource.</title>
        <authorList>
            <person name="Stapleton M."/>
            <person name="Carlson J.W."/>
            <person name="Brokstein P."/>
            <person name="Yu C."/>
            <person name="Champe M."/>
            <person name="George R.A."/>
            <person name="Guarin H."/>
            <person name="Kronmiller B."/>
            <person name="Pacleb J.M."/>
            <person name="Park S."/>
            <person name="Wan K.H."/>
            <person name="Rubin G.M."/>
            <person name="Celniker S.E."/>
        </authorList>
    </citation>
    <scope>NUCLEOTIDE SEQUENCE [LARGE SCALE MRNA]</scope>
    <source>
        <strain>Berkeley</strain>
        <tissue>Head</tissue>
    </source>
</reference>
<reference key="6">
    <citation type="submission" date="2003-08" db="EMBL/GenBank/DDBJ databases">
        <authorList>
            <person name="Stapleton M."/>
            <person name="Brokstein P."/>
            <person name="Hong L."/>
            <person name="Agbayani A."/>
            <person name="Carlson J.W."/>
            <person name="Champe M."/>
            <person name="Chavez C."/>
            <person name="Dorsett V."/>
            <person name="Dresnek D."/>
            <person name="Farfan D."/>
            <person name="Frise E."/>
            <person name="George R.A."/>
            <person name="Gonzalez M."/>
            <person name="Guarin H."/>
            <person name="Kronmiller B."/>
            <person name="Li P.W."/>
            <person name="Liao G."/>
            <person name="Miranda A."/>
            <person name="Mungall C.J."/>
            <person name="Nunoo J."/>
            <person name="Pacleb J.M."/>
            <person name="Paragas V."/>
            <person name="Park S."/>
            <person name="Patel S."/>
            <person name="Phouanenavong S."/>
            <person name="Wan K.H."/>
            <person name="Yu C."/>
            <person name="Lewis S.E."/>
            <person name="Rubin G.M."/>
            <person name="Celniker S.E."/>
        </authorList>
    </citation>
    <scope>NUCLEOTIDE SEQUENCE [LARGE SCALE MRNA]</scope>
    <source>
        <strain>Berkeley</strain>
        <tissue>Embryo</tissue>
    </source>
</reference>
<reference key="7">
    <citation type="journal article" date="1999" name="Genes Dev.">
        <title>The Drosophila Pkn protein kinase is a Rho/Rac effector target required for dorsal closure during embryogenesis.</title>
        <authorList>
            <person name="Lu Y."/>
            <person name="Settleman J."/>
        </authorList>
    </citation>
    <scope>FUNCTION</scope>
    <scope>INTERACTION WITH PKN</scope>
</reference>
<reference key="8">
    <citation type="journal article" date="2007" name="Genetics">
        <title>A rho-binding protein kinase C-like activity is required for the function of protein kinase N in Drosophila development.</title>
        <authorList>
            <person name="Betson M."/>
            <person name="Settleman J."/>
        </authorList>
    </citation>
    <scope>INTERACTION WITH PKN</scope>
</reference>
<reference key="9">
    <citation type="journal article" date="2013" name="Elife">
        <title>Apical targeting of the formin Diaphanous in Drosophila tubular epithelia.</title>
        <authorList>
            <person name="Rousso T."/>
            <person name="Shewan A.M."/>
            <person name="Mostov K.E."/>
            <person name="Schejter E.D."/>
            <person name="Shilo B.Z."/>
        </authorList>
    </citation>
    <scope>FUNCTION</scope>
    <scope>INTERACTION WITH DIA</scope>
    <scope>SUBCELLULAR LOCATION</scope>
</reference>
<reference key="10">
    <citation type="journal article" date="2014" name="J. Cell Biol.">
        <title>Rho GTPase and Shroom direct planar polarized actomyosin contractility during convergent extension.</title>
        <authorList>
            <person name="Simoes S."/>
            <person name="Mainieri A."/>
            <person name="Zallen J.A."/>
        </authorList>
    </citation>
    <scope>FUNCTION</scope>
    <scope>SUBCELLULAR LOCATION</scope>
</reference>
<reference key="11">
    <citation type="journal article" date="2015" name="Mol. Biol. Cell">
        <title>Wash functions downstream of Rho1 GTPase in a subset of Drosophila immune cell developmental migrations.</title>
        <authorList>
            <person name="Verboon J.M."/>
            <person name="Rahe T.K."/>
            <person name="Rodriguez-Mesa E."/>
            <person name="Parkhurst S.M."/>
        </authorList>
    </citation>
    <scope>FUNCTION</scope>
    <scope>SUBUNIT</scope>
    <scope>TISSUE SPECIFICITY</scope>
    <scope>MUTAGENESIS OF 27-LYS--GLN-29; PHE-39 AND 51-LYS--GLU-54</scope>
</reference>
<comment type="function">
    <text evidence="3 4 6 7 8 9">Has a role in regulating actin cytoskeletal organization: required during early development for proper execution of morphogenetic movements of individual cells and groups of cells important for the formation of the embryonic body plan (PubMed:10556060, PubMed:24535826, PubMed:25739458). Plays a role in regulating dorsal closure during embryogenesis (PubMed:10323867, PubMed:10556060). During axis elongation, required for Rho-kinase Rok planar polarity and adherens junction localization as well as for generating a planar polarized distribution of the actin-binding protein Shrm (PubMed:24535826). During embryogenesis, acts upstream of wash to regulate the developmental migration of tail hemocytes anteriorly along the ventral midline (PubMed:25739458). May have a role in eye development (PubMed:7835340). Involved in targeted recruitment of dia/diaphanous to apical membranes of polarized epithelial cells (PubMed:23853710).</text>
</comment>
<comment type="subunit">
    <text evidence="3 4 5 6">Interacts with capu (PubMed:10556060). Interacts (via REM repeats) with Pkn (via N-terminus) (PubMed:10323867, PubMed:17507675). Interacts (via N-terminus) with wash (via N-terminus) (PubMed:25739458). May interact with dia/diaphanous (via CBD/FH3 domain) (PubMed:23853710).</text>
</comment>
<comment type="subcellular location">
    <subcellularLocation>
        <location evidence="10">Cell membrane</location>
        <topology evidence="10">Lipid-anchor</topology>
        <orientation evidence="10">Cytoplasmic side</orientation>
    </subcellularLocation>
    <subcellularLocation>
        <location>Cytoplasm</location>
        <location>Cytoskeleton</location>
    </subcellularLocation>
    <subcellularLocation>
        <location evidence="6 7">Apical cell membrane</location>
        <topology evidence="10">Lipid-anchor</topology>
        <orientation evidence="10">Cytoplasmic side</orientation>
    </subcellularLocation>
    <subcellularLocation>
        <location evidence="7">Lateral cell membrane</location>
        <topology evidence="10">Lipid-anchor</topology>
        <orientation evidence="10">Cytoplasmic side</orientation>
    </subcellularLocation>
</comment>
<comment type="tissue specificity">
    <text evidence="8">Expressed in hemocytes (at protein level).</text>
</comment>
<comment type="disruption phenotype">
    <text evidence="4">Embryonic lethal. Embryos exhibit severe defects in head involution and imperfect dorsal closure. During head involution, the head structures fail to internalize resulting in holes in the dorsal anterior region of the cuticle. The disruption in the dorsal surface stretches the ventral surface, causing the cuticle to bow.</text>
</comment>
<comment type="similarity">
    <text evidence="10">Belongs to the small GTPase superfamily. Rho family.</text>
</comment>
<proteinExistence type="evidence at protein level"/>
<evidence type="ECO:0000250" key="1"/>
<evidence type="ECO:0000255" key="2"/>
<evidence type="ECO:0000269" key="3">
    <source>
    </source>
</evidence>
<evidence type="ECO:0000269" key="4">
    <source>
    </source>
</evidence>
<evidence type="ECO:0000269" key="5">
    <source>
    </source>
</evidence>
<evidence type="ECO:0000269" key="6">
    <source>
    </source>
</evidence>
<evidence type="ECO:0000269" key="7">
    <source>
    </source>
</evidence>
<evidence type="ECO:0000269" key="8">
    <source>
    </source>
</evidence>
<evidence type="ECO:0000269" key="9">
    <source>
    </source>
</evidence>
<evidence type="ECO:0000305" key="10"/>
<evidence type="ECO:0000312" key="11">
    <source>
        <dbReference type="FlyBase" id="FBgn0014020"/>
    </source>
</evidence>
<organism>
    <name type="scientific">Drosophila melanogaster</name>
    <name type="common">Fruit fly</name>
    <dbReference type="NCBI Taxonomy" id="7227"/>
    <lineage>
        <taxon>Eukaryota</taxon>
        <taxon>Metazoa</taxon>
        <taxon>Ecdysozoa</taxon>
        <taxon>Arthropoda</taxon>
        <taxon>Hexapoda</taxon>
        <taxon>Insecta</taxon>
        <taxon>Pterygota</taxon>
        <taxon>Neoptera</taxon>
        <taxon>Endopterygota</taxon>
        <taxon>Diptera</taxon>
        <taxon>Brachycera</taxon>
        <taxon>Muscomorpha</taxon>
        <taxon>Ephydroidea</taxon>
        <taxon>Drosophilidae</taxon>
        <taxon>Drosophila</taxon>
        <taxon>Sophophora</taxon>
    </lineage>
</organism>
<sequence>MTTIRKKLVIVGDGACGKTCLLIVFSKDQFPEVYVPTVFENYVADIEVDGKQVELALWDTAGQEDYDRLRPLSYPDTDVILMCFSVDSPDSLENIPEKWTPEVKHFCPNVPIILVGNKKDLRNDPNTIRDLAKMKQEPVKPQEGRAMAEKINAFAYLECSAKSKEGVRDVFETATRAALQVKKRKKTRCLLL</sequence>
<name>RHO1_DROME</name>
<accession>P48148</accession>
<accession>A4UZI6</accession>
<accession>Q0E958</accession>
<accession>Q9V3J0</accession>
<protein>
    <recommendedName>
        <fullName>Ras-like GTP-binding protein Rho1</fullName>
    </recommendedName>
</protein>
<dbReference type="EMBL" id="L38311">
    <property type="protein sequence ID" value="AAA67042.1"/>
    <property type="molecule type" value="mRNA"/>
</dbReference>
<dbReference type="EMBL" id="AF177871">
    <property type="protein sequence ID" value="AAF01183.1"/>
    <property type="molecule type" value="Genomic_DNA"/>
</dbReference>
<dbReference type="EMBL" id="AF177872">
    <property type="protein sequence ID" value="AAF01184.1"/>
    <property type="molecule type" value="mRNA"/>
</dbReference>
<dbReference type="EMBL" id="AF177873">
    <property type="protein sequence ID" value="AAF01185.1"/>
    <property type="molecule type" value="mRNA"/>
</dbReference>
<dbReference type="EMBL" id="AF177874">
    <property type="protein sequence ID" value="AAF01186.1"/>
    <property type="molecule type" value="mRNA"/>
</dbReference>
<dbReference type="EMBL" id="AE013599">
    <property type="protein sequence ID" value="AAM70944.1"/>
    <property type="molecule type" value="Genomic_DNA"/>
</dbReference>
<dbReference type="EMBL" id="AE013599">
    <property type="protein sequence ID" value="AAM70945.1"/>
    <property type="molecule type" value="Genomic_DNA"/>
</dbReference>
<dbReference type="EMBL" id="AE013599">
    <property type="protein sequence ID" value="AAM70946.1"/>
    <property type="molecule type" value="Genomic_DNA"/>
</dbReference>
<dbReference type="EMBL" id="AE013599">
    <property type="protein sequence ID" value="AAS64843.1"/>
    <property type="molecule type" value="Genomic_DNA"/>
</dbReference>
<dbReference type="EMBL" id="AE013599">
    <property type="protein sequence ID" value="AAS64844.1"/>
    <property type="molecule type" value="Genomic_DNA"/>
</dbReference>
<dbReference type="EMBL" id="AY119536">
    <property type="protein sequence ID" value="AAM50190.1"/>
    <property type="molecule type" value="mRNA"/>
</dbReference>
<dbReference type="EMBL" id="BT010085">
    <property type="protein sequence ID" value="AAQ22554.1"/>
    <property type="molecule type" value="mRNA"/>
</dbReference>
<dbReference type="PIR" id="S54294">
    <property type="entry name" value="S54294"/>
</dbReference>
<dbReference type="RefSeq" id="NP_477098.1">
    <property type="nucleotide sequence ID" value="NM_057750.4"/>
</dbReference>
<dbReference type="RefSeq" id="NP_599135.1">
    <property type="nucleotide sequence ID" value="NM_134308.3"/>
</dbReference>
<dbReference type="RefSeq" id="NP_599136.1">
    <property type="nucleotide sequence ID" value="NM_134309.2"/>
</dbReference>
<dbReference type="RefSeq" id="NP_725524.1">
    <property type="nucleotide sequence ID" value="NM_166139.3"/>
</dbReference>
<dbReference type="RefSeq" id="NP_995849.1">
    <property type="nucleotide sequence ID" value="NM_206127.2"/>
</dbReference>
<dbReference type="RefSeq" id="NP_995850.1">
    <property type="nucleotide sequence ID" value="NM_206128.2"/>
</dbReference>
<dbReference type="SMR" id="P48148"/>
<dbReference type="BioGRID" id="62500">
    <property type="interactions" value="94"/>
</dbReference>
<dbReference type="DIP" id="DIP-22676N"/>
<dbReference type="FunCoup" id="P48148">
    <property type="interactions" value="1421"/>
</dbReference>
<dbReference type="IntAct" id="P48148">
    <property type="interactions" value="15"/>
</dbReference>
<dbReference type="STRING" id="7227.FBpp0086354"/>
<dbReference type="PaxDb" id="7227-FBpp0086354"/>
<dbReference type="DNASU" id="36775"/>
<dbReference type="EnsemblMetazoa" id="FBtr0087211">
    <property type="protein sequence ID" value="FBpp0086353"/>
    <property type="gene ID" value="FBgn0014020"/>
</dbReference>
<dbReference type="EnsemblMetazoa" id="FBtr0087212">
    <property type="protein sequence ID" value="FBpp0086354"/>
    <property type="gene ID" value="FBgn0014020"/>
</dbReference>
<dbReference type="EnsemblMetazoa" id="FBtr0087213">
    <property type="protein sequence ID" value="FBpp0086355"/>
    <property type="gene ID" value="FBgn0014020"/>
</dbReference>
<dbReference type="EnsemblMetazoa" id="FBtr0087214">
    <property type="protein sequence ID" value="FBpp0086356"/>
    <property type="gene ID" value="FBgn0014020"/>
</dbReference>
<dbReference type="EnsemblMetazoa" id="FBtr0087216">
    <property type="protein sequence ID" value="FBpp0089129"/>
    <property type="gene ID" value="FBgn0014020"/>
</dbReference>
<dbReference type="EnsemblMetazoa" id="FBtr0087217">
    <property type="protein sequence ID" value="FBpp0089130"/>
    <property type="gene ID" value="FBgn0014020"/>
</dbReference>
<dbReference type="GeneID" id="36775"/>
<dbReference type="KEGG" id="dme:Dmel_CG8416"/>
<dbReference type="UCSC" id="CG8416-RC">
    <property type="organism name" value="d. melanogaster"/>
</dbReference>
<dbReference type="AGR" id="FB:FBgn0014020"/>
<dbReference type="CTD" id="36775"/>
<dbReference type="FlyBase" id="FBgn0014020">
    <property type="gene designation" value="Rho1"/>
</dbReference>
<dbReference type="VEuPathDB" id="VectorBase:FBgn0014020"/>
<dbReference type="eggNOG" id="KOG0393">
    <property type="taxonomic scope" value="Eukaryota"/>
</dbReference>
<dbReference type="GeneTree" id="ENSGT00950000182945"/>
<dbReference type="HOGENOM" id="CLU_041217_21_2_1"/>
<dbReference type="InParanoid" id="P48148"/>
<dbReference type="OMA" id="EERPQMA"/>
<dbReference type="OrthoDB" id="8830751at2759"/>
<dbReference type="PhylomeDB" id="P48148"/>
<dbReference type="Reactome" id="R-DME-114604">
    <property type="pathway name" value="GPVI-mediated activation cascade"/>
</dbReference>
<dbReference type="Reactome" id="R-DME-193634">
    <property type="pathway name" value="Axonal growth inhibition (RHOA activation)"/>
</dbReference>
<dbReference type="Reactome" id="R-DME-198203">
    <property type="pathway name" value="PI3K/AKT activation"/>
</dbReference>
<dbReference type="Reactome" id="R-DME-2173791">
    <property type="pathway name" value="TGF-beta receptor signaling in EMT (epithelial to mesenchymal transition)"/>
</dbReference>
<dbReference type="Reactome" id="R-DME-350368">
    <property type="pathway name" value="Activation of RHO1 by FZ:DSH complex"/>
</dbReference>
<dbReference type="Reactome" id="R-DME-350407">
    <property type="pathway name" value="RHO1 GTPase cycle"/>
</dbReference>
<dbReference type="Reactome" id="R-DME-350480">
    <property type="pathway name" value="Activation of non-muscle Myosin II"/>
</dbReference>
<dbReference type="Reactome" id="R-DME-392451">
    <property type="pathway name" value="G beta:gamma signalling through PI3Kgamma"/>
</dbReference>
<dbReference type="Reactome" id="R-DME-3928662">
    <property type="pathway name" value="EPHB-mediated forward signaling"/>
</dbReference>
<dbReference type="Reactome" id="R-DME-3928663">
    <property type="pathway name" value="EPHA-mediated growth cone collapse"/>
</dbReference>
<dbReference type="Reactome" id="R-DME-4086400">
    <property type="pathway name" value="PCP/CE pathway"/>
</dbReference>
<dbReference type="Reactome" id="R-DME-416482">
    <property type="pathway name" value="G alpha (12/13) signalling events"/>
</dbReference>
<dbReference type="Reactome" id="R-DME-416572">
    <property type="pathway name" value="Sema4D induced cell migration and growth-cone collapse"/>
</dbReference>
<dbReference type="Reactome" id="R-DME-4420097">
    <property type="pathway name" value="VEGFA-VEGFR2 Pathway"/>
</dbReference>
<dbReference type="Reactome" id="R-DME-450728">
    <property type="pathway name" value="Inhibition of actin polymerization"/>
</dbReference>
<dbReference type="Reactome" id="R-DME-5625740">
    <property type="pathway name" value="RHO GTPases activate PKNs"/>
</dbReference>
<dbReference type="Reactome" id="R-DME-5625900">
    <property type="pathway name" value="RHO GTPases activate CIT"/>
</dbReference>
<dbReference type="Reactome" id="R-DME-5627117">
    <property type="pathway name" value="RHO GTPases Activate ROCKs"/>
</dbReference>
<dbReference type="Reactome" id="R-DME-5663220">
    <property type="pathway name" value="RHO GTPases Activate Formins"/>
</dbReference>
<dbReference type="Reactome" id="R-DME-5666185">
    <property type="pathway name" value="RHO GTPases Activate Rhotekin and Rhophilins"/>
</dbReference>
<dbReference type="Reactome" id="R-DME-5689896">
    <property type="pathway name" value="Ovarian tumor domain proteases"/>
</dbReference>
<dbReference type="Reactome" id="R-DME-6785631">
    <property type="pathway name" value="ERBB2 Regulates Cell Motility"/>
</dbReference>
<dbReference type="Reactome" id="R-DME-6798695">
    <property type="pathway name" value="Neutrophil degranulation"/>
</dbReference>
<dbReference type="Reactome" id="R-DME-8849471">
    <property type="pathway name" value="PTK6 Regulates RHO GTPases, RAS GTPase and MAP kinases"/>
</dbReference>
<dbReference type="Reactome" id="R-DME-8980692">
    <property type="pathway name" value="RHOA GTPase cycle"/>
</dbReference>
<dbReference type="Reactome" id="R-DME-9013026">
    <property type="pathway name" value="RHOB GTPase cycle"/>
</dbReference>
<dbReference type="Reactome" id="R-DME-9013405">
    <property type="pathway name" value="RHOD GTPase cycle"/>
</dbReference>
<dbReference type="Reactome" id="R-DME-9035034">
    <property type="pathway name" value="RHOF GTPase cycle"/>
</dbReference>
<dbReference type="BioGRID-ORCS" id="36775">
    <property type="hits" value="3 hits in 3 CRISPR screens"/>
</dbReference>
<dbReference type="ChiTaRS" id="Rho1">
    <property type="organism name" value="fly"/>
</dbReference>
<dbReference type="GenomeRNAi" id="36775"/>
<dbReference type="PRO" id="PR:P48148"/>
<dbReference type="Proteomes" id="UP000000803">
    <property type="component" value="Chromosome 2R"/>
</dbReference>
<dbReference type="Bgee" id="FBgn0014020">
    <property type="expression patterns" value="Expressed in fat body cell in open tracheal system trachea and 285 other cell types or tissues"/>
</dbReference>
<dbReference type="GO" id="GO:0045179">
    <property type="term" value="C:apical cortex"/>
    <property type="evidence" value="ECO:0000314"/>
    <property type="project" value="FlyBase"/>
</dbReference>
<dbReference type="GO" id="GO:0016324">
    <property type="term" value="C:apical plasma membrane"/>
    <property type="evidence" value="ECO:0007669"/>
    <property type="project" value="UniProtKB-SubCell"/>
</dbReference>
<dbReference type="GO" id="GO:0005938">
    <property type="term" value="C:cell cortex"/>
    <property type="evidence" value="ECO:0000314"/>
    <property type="project" value="FlyBase"/>
</dbReference>
<dbReference type="GO" id="GO:0070451">
    <property type="term" value="C:cell hair"/>
    <property type="evidence" value="ECO:0000314"/>
    <property type="project" value="FlyBase"/>
</dbReference>
<dbReference type="GO" id="GO:0044291">
    <property type="term" value="C:cell-cell contact zone"/>
    <property type="evidence" value="ECO:0000314"/>
    <property type="project" value="FlyBase"/>
</dbReference>
<dbReference type="GO" id="GO:0090688">
    <property type="term" value="C:cleavage furrow rim"/>
    <property type="evidence" value="ECO:0000314"/>
    <property type="project" value="FlyBase"/>
</dbReference>
<dbReference type="GO" id="GO:0005737">
    <property type="term" value="C:cytoplasm"/>
    <property type="evidence" value="ECO:0000314"/>
    <property type="project" value="FlyBase"/>
</dbReference>
<dbReference type="GO" id="GO:0005856">
    <property type="term" value="C:cytoskeleton"/>
    <property type="evidence" value="ECO:0007669"/>
    <property type="project" value="UniProtKB-SubCell"/>
</dbReference>
<dbReference type="GO" id="GO:0005829">
    <property type="term" value="C:cytosol"/>
    <property type="evidence" value="ECO:0000318"/>
    <property type="project" value="GO_Central"/>
</dbReference>
<dbReference type="GO" id="GO:0016328">
    <property type="term" value="C:lateral plasma membrane"/>
    <property type="evidence" value="ECO:0007669"/>
    <property type="project" value="UniProtKB-SubCell"/>
</dbReference>
<dbReference type="GO" id="GO:0005886">
    <property type="term" value="C:plasma membrane"/>
    <property type="evidence" value="ECO:0007005"/>
    <property type="project" value="FlyBase"/>
</dbReference>
<dbReference type="GO" id="GO:0003779">
    <property type="term" value="F:actin binding"/>
    <property type="evidence" value="ECO:0007669"/>
    <property type="project" value="UniProtKB-KW"/>
</dbReference>
<dbReference type="GO" id="GO:0005525">
    <property type="term" value="F:GTP binding"/>
    <property type="evidence" value="ECO:0000318"/>
    <property type="project" value="GO_Central"/>
</dbReference>
<dbReference type="GO" id="GO:0003924">
    <property type="term" value="F:GTPase activity"/>
    <property type="evidence" value="ECO:0000314"/>
    <property type="project" value="FlyBase"/>
</dbReference>
<dbReference type="GO" id="GO:0019900">
    <property type="term" value="F:kinase binding"/>
    <property type="evidence" value="ECO:0000353"/>
    <property type="project" value="FlyBase"/>
</dbReference>
<dbReference type="GO" id="GO:0019901">
    <property type="term" value="F:protein kinase binding"/>
    <property type="evidence" value="ECO:0000318"/>
    <property type="project" value="GO_Central"/>
</dbReference>
<dbReference type="GO" id="GO:0030036">
    <property type="term" value="P:actin cytoskeleton organization"/>
    <property type="evidence" value="ECO:0000314"/>
    <property type="project" value="FlyBase"/>
</dbReference>
<dbReference type="GO" id="GO:0051017">
    <property type="term" value="P:actin filament bundle assembly"/>
    <property type="evidence" value="ECO:0000315"/>
    <property type="project" value="FlyBase"/>
</dbReference>
<dbReference type="GO" id="GO:0007015">
    <property type="term" value="P:actin filament organization"/>
    <property type="evidence" value="ECO:0000315"/>
    <property type="project" value="FlyBase"/>
</dbReference>
<dbReference type="GO" id="GO:0070252">
    <property type="term" value="P:actin-mediated cell contraction"/>
    <property type="evidence" value="ECO:0000316"/>
    <property type="project" value="FlyBase"/>
</dbReference>
<dbReference type="GO" id="GO:0034334">
    <property type="term" value="P:adherens junction maintenance"/>
    <property type="evidence" value="ECO:0000315"/>
    <property type="project" value="FlyBase"/>
</dbReference>
<dbReference type="GO" id="GO:0003383">
    <property type="term" value="P:apical constriction"/>
    <property type="evidence" value="ECO:0000315"/>
    <property type="project" value="FlyBase"/>
</dbReference>
<dbReference type="GO" id="GO:0007411">
    <property type="term" value="P:axon guidance"/>
    <property type="evidence" value="ECO:0000315"/>
    <property type="project" value="FlyBase"/>
</dbReference>
<dbReference type="GO" id="GO:0007298">
    <property type="term" value="P:border follicle cell migration"/>
    <property type="evidence" value="ECO:0000315"/>
    <property type="project" value="FlyBase"/>
</dbReference>
<dbReference type="GO" id="GO:0090254">
    <property type="term" value="P:cell elongation involved in imaginal disc-derived wing morphogenesis"/>
    <property type="evidence" value="ECO:0000315"/>
    <property type="project" value="FlyBase"/>
</dbReference>
<dbReference type="GO" id="GO:0016477">
    <property type="term" value="P:cell migration"/>
    <property type="evidence" value="ECO:0000318"/>
    <property type="project" value="GO_Central"/>
</dbReference>
<dbReference type="GO" id="GO:0030030">
    <property type="term" value="P:cell projection organization"/>
    <property type="evidence" value="ECO:0000315"/>
    <property type="project" value="FlyBase"/>
</dbReference>
<dbReference type="GO" id="GO:0007349">
    <property type="term" value="P:cellularization"/>
    <property type="evidence" value="ECO:0000315"/>
    <property type="project" value="FlyBase"/>
</dbReference>
<dbReference type="GO" id="GO:0001745">
    <property type="term" value="P:compound eye morphogenesis"/>
    <property type="evidence" value="ECO:0000316"/>
    <property type="project" value="FlyBase"/>
</dbReference>
<dbReference type="GO" id="GO:0030866">
    <property type="term" value="P:cortical actin cytoskeleton organization"/>
    <property type="evidence" value="ECO:0000315"/>
    <property type="project" value="FlyBase"/>
</dbReference>
<dbReference type="GO" id="GO:0048813">
    <property type="term" value="P:dendrite morphogenesis"/>
    <property type="evidence" value="ECO:0000304"/>
    <property type="project" value="FlyBase"/>
</dbReference>
<dbReference type="GO" id="GO:0070593">
    <property type="term" value="P:dendrite self-avoidance"/>
    <property type="evidence" value="ECO:0000316"/>
    <property type="project" value="FlyBase"/>
</dbReference>
<dbReference type="GO" id="GO:0007368">
    <property type="term" value="P:determination of left/right symmetry"/>
    <property type="evidence" value="ECO:0000315"/>
    <property type="project" value="FlyBase"/>
</dbReference>
<dbReference type="GO" id="GO:0007391">
    <property type="term" value="P:dorsal closure"/>
    <property type="evidence" value="ECO:0000315"/>
    <property type="project" value="UniProtKB"/>
</dbReference>
<dbReference type="GO" id="GO:0046663">
    <property type="term" value="P:dorsal closure, leading edge cell differentiation"/>
    <property type="evidence" value="ECO:0000315"/>
    <property type="project" value="FlyBase"/>
</dbReference>
<dbReference type="GO" id="GO:0007395">
    <property type="term" value="P:dorsal closure, spreading of leading edge cells"/>
    <property type="evidence" value="ECO:0000315"/>
    <property type="project" value="FlyBase"/>
</dbReference>
<dbReference type="GO" id="GO:0032456">
    <property type="term" value="P:endocytic recycling"/>
    <property type="evidence" value="ECO:0000315"/>
    <property type="project" value="FlyBase"/>
</dbReference>
<dbReference type="GO" id="GO:0006897">
    <property type="term" value="P:endocytosis"/>
    <property type="evidence" value="ECO:0000315"/>
    <property type="project" value="FlyBase"/>
</dbReference>
<dbReference type="GO" id="GO:0042249">
    <property type="term" value="P:establishment of planar polarity of embryonic epithelium"/>
    <property type="evidence" value="ECO:0000315"/>
    <property type="project" value="FlyBase"/>
</dbReference>
<dbReference type="GO" id="GO:0045184">
    <property type="term" value="P:establishment of protein localization"/>
    <property type="evidence" value="ECO:0000315"/>
    <property type="project" value="FlyBase"/>
</dbReference>
<dbReference type="GO" id="GO:0030950">
    <property type="term" value="P:establishment or maintenance of actin cytoskeleton polarity"/>
    <property type="evidence" value="ECO:0000315"/>
    <property type="project" value="FlyBase"/>
</dbReference>
<dbReference type="GO" id="GO:0010004">
    <property type="term" value="P:gastrulation involving germ band extension"/>
    <property type="evidence" value="ECO:0000315"/>
    <property type="project" value="FlyBase"/>
</dbReference>
<dbReference type="GO" id="GO:0007377">
    <property type="term" value="P:germ-band extension"/>
    <property type="evidence" value="ECO:0000315"/>
    <property type="project" value="FlyBase"/>
</dbReference>
<dbReference type="GO" id="GO:0008347">
    <property type="term" value="P:glial cell migration"/>
    <property type="evidence" value="ECO:0000315"/>
    <property type="project" value="FlyBase"/>
</dbReference>
<dbReference type="GO" id="GO:0035099">
    <property type="term" value="P:hemocyte migration"/>
    <property type="evidence" value="ECO:0000315"/>
    <property type="project" value="FlyBase"/>
</dbReference>
<dbReference type="GO" id="GO:0007480">
    <property type="term" value="P:imaginal disc-derived leg morphogenesis"/>
    <property type="evidence" value="ECO:0000315"/>
    <property type="project" value="FlyBase"/>
</dbReference>
<dbReference type="GO" id="GO:0035317">
    <property type="term" value="P:imaginal disc-derived wing hair organization"/>
    <property type="evidence" value="ECO:0000315"/>
    <property type="project" value="FlyBase"/>
</dbReference>
<dbReference type="GO" id="GO:0035149">
    <property type="term" value="P:lumen formation, open tracheal system"/>
    <property type="evidence" value="ECO:0000315"/>
    <property type="project" value="FlyBase"/>
</dbReference>
<dbReference type="GO" id="GO:0045199">
    <property type="term" value="P:maintenance of epithelial cell apical/basal polarity"/>
    <property type="evidence" value="ECO:0000315"/>
    <property type="project" value="FlyBase"/>
</dbReference>
<dbReference type="GO" id="GO:0035006">
    <property type="term" value="P:melanization defense response"/>
    <property type="evidence" value="ECO:0000315"/>
    <property type="project" value="FlyBase"/>
</dbReference>
<dbReference type="GO" id="GO:1903475">
    <property type="term" value="P:mitotic actomyosin contractile ring assembly"/>
    <property type="evidence" value="ECO:0000315"/>
    <property type="project" value="FlyBase"/>
</dbReference>
<dbReference type="GO" id="GO:0000281">
    <property type="term" value="P:mitotic cytokinesis"/>
    <property type="evidence" value="ECO:0000315"/>
    <property type="project" value="FlyBase"/>
</dbReference>
<dbReference type="GO" id="GO:1902408">
    <property type="term" value="P:mitotic cytokinesis, division site positioning"/>
    <property type="evidence" value="ECO:0000270"/>
    <property type="project" value="FlyBase"/>
</dbReference>
<dbReference type="GO" id="GO:0008045">
    <property type="term" value="P:motor neuron axon guidance"/>
    <property type="evidence" value="ECO:0000315"/>
    <property type="project" value="FlyBase"/>
</dbReference>
<dbReference type="GO" id="GO:0090090">
    <property type="term" value="P:negative regulation of canonical Wnt signaling pathway"/>
    <property type="evidence" value="ECO:0000315"/>
    <property type="project" value="FlyBase"/>
</dbReference>
<dbReference type="GO" id="GO:0007405">
    <property type="term" value="P:neuroblast proliferation"/>
    <property type="evidence" value="ECO:0000315"/>
    <property type="project" value="FlyBase"/>
</dbReference>
<dbReference type="GO" id="GO:0048812">
    <property type="term" value="P:neuron projection morphogenesis"/>
    <property type="evidence" value="ECO:0000315"/>
    <property type="project" value="FlyBase"/>
</dbReference>
<dbReference type="GO" id="GO:0007424">
    <property type="term" value="P:open tracheal system development"/>
    <property type="evidence" value="ECO:0000315"/>
    <property type="project" value="FlyBase"/>
</dbReference>
<dbReference type="GO" id="GO:0007422">
    <property type="term" value="P:peripheral nervous system development"/>
    <property type="evidence" value="ECO:0000315"/>
    <property type="project" value="FlyBase"/>
</dbReference>
<dbReference type="GO" id="GO:0071902">
    <property type="term" value="P:positive regulation of protein serine/threonine kinase activity"/>
    <property type="evidence" value="ECO:0000314"/>
    <property type="project" value="UniProtKB"/>
</dbReference>
<dbReference type="GO" id="GO:0090303">
    <property type="term" value="P:positive regulation of wound healing"/>
    <property type="evidence" value="ECO:0000314"/>
    <property type="project" value="FlyBase"/>
</dbReference>
<dbReference type="GO" id="GO:0007374">
    <property type="term" value="P:posterior midgut invagination"/>
    <property type="evidence" value="ECO:0000315"/>
    <property type="project" value="FlyBase"/>
</dbReference>
<dbReference type="GO" id="GO:0008104">
    <property type="term" value="P:protein localization"/>
    <property type="evidence" value="ECO:0000315"/>
    <property type="project" value="FlyBase"/>
</dbReference>
<dbReference type="GO" id="GO:0090251">
    <property type="term" value="P:protein localization involved in establishment of planar polarity"/>
    <property type="evidence" value="ECO:0000315"/>
    <property type="project" value="FlyBase"/>
</dbReference>
<dbReference type="GO" id="GO:0071896">
    <property type="term" value="P:protein localization to adherens junction"/>
    <property type="evidence" value="ECO:0000315"/>
    <property type="project" value="FlyBase"/>
</dbReference>
<dbReference type="GO" id="GO:0030589">
    <property type="term" value="P:pseudocleavage involved in syncytial blastoderm formation"/>
    <property type="evidence" value="ECO:0000315"/>
    <property type="project" value="FlyBase"/>
</dbReference>
<dbReference type="GO" id="GO:0032956">
    <property type="term" value="P:regulation of actin cytoskeleton organization"/>
    <property type="evidence" value="ECO:0000318"/>
    <property type="project" value="GO_Central"/>
</dbReference>
<dbReference type="GO" id="GO:0110020">
    <property type="term" value="P:regulation of actomyosin structure organization"/>
    <property type="evidence" value="ECO:0000316"/>
    <property type="project" value="FlyBase"/>
</dbReference>
<dbReference type="GO" id="GO:0050770">
    <property type="term" value="P:regulation of axonogenesis"/>
    <property type="evidence" value="ECO:0000316"/>
    <property type="project" value="FlyBase"/>
</dbReference>
<dbReference type="GO" id="GO:0030334">
    <property type="term" value="P:regulation of cell migration"/>
    <property type="evidence" value="ECO:0000315"/>
    <property type="project" value="FlyBase"/>
</dbReference>
<dbReference type="GO" id="GO:0051493">
    <property type="term" value="P:regulation of cytoskeleton organization"/>
    <property type="evidence" value="ECO:0000314"/>
    <property type="project" value="FlyBase"/>
</dbReference>
<dbReference type="GO" id="GO:0016476">
    <property type="term" value="P:regulation of embryonic cell shape"/>
    <property type="evidence" value="ECO:0000315"/>
    <property type="project" value="FlyBase"/>
</dbReference>
<dbReference type="GO" id="GO:0051489">
    <property type="term" value="P:regulation of filopodium assembly"/>
    <property type="evidence" value="ECO:0000315"/>
    <property type="project" value="FlyBase"/>
</dbReference>
<dbReference type="GO" id="GO:1904059">
    <property type="term" value="P:regulation of locomotor rhythm"/>
    <property type="evidence" value="ECO:0000315"/>
    <property type="project" value="FlyBase"/>
</dbReference>
<dbReference type="GO" id="GO:0035298">
    <property type="term" value="P:regulation of Malpighian tubule size"/>
    <property type="evidence" value="ECO:0000315"/>
    <property type="project" value="FlyBase"/>
</dbReference>
<dbReference type="GO" id="GO:1901739">
    <property type="term" value="P:regulation of myoblast fusion"/>
    <property type="evidence" value="ECO:0000316"/>
    <property type="project" value="FlyBase"/>
</dbReference>
<dbReference type="GO" id="GO:0035159">
    <property type="term" value="P:regulation of tube length, open tracheal system"/>
    <property type="evidence" value="ECO:0000315"/>
    <property type="project" value="FlyBase"/>
</dbReference>
<dbReference type="GO" id="GO:0009611">
    <property type="term" value="P:response to wounding"/>
    <property type="evidence" value="ECO:0000315"/>
    <property type="project" value="FlyBase"/>
</dbReference>
<dbReference type="GO" id="GO:0007435">
    <property type="term" value="P:salivary gland morphogenesis"/>
    <property type="evidence" value="ECO:0000315"/>
    <property type="project" value="FlyBase"/>
</dbReference>
<dbReference type="GO" id="GO:0007165">
    <property type="term" value="P:signal transduction"/>
    <property type="evidence" value="ECO:0000318"/>
    <property type="project" value="GO_Central"/>
</dbReference>
<dbReference type="GO" id="GO:0007264">
    <property type="term" value="P:small GTPase-mediated signal transduction"/>
    <property type="evidence" value="ECO:0007669"/>
    <property type="project" value="InterPro"/>
</dbReference>
<dbReference type="GO" id="GO:0035277">
    <property type="term" value="P:spiracle morphogenesis, open tracheal system"/>
    <property type="evidence" value="ECO:0000315"/>
    <property type="project" value="FlyBase"/>
</dbReference>
<dbReference type="GO" id="GO:0035202">
    <property type="term" value="P:tracheal pit formation in open tracheal system"/>
    <property type="evidence" value="ECO:0000316"/>
    <property type="project" value="FlyBase"/>
</dbReference>
<dbReference type="GO" id="GO:0007370">
    <property type="term" value="P:ventral furrow formation"/>
    <property type="evidence" value="ECO:0000315"/>
    <property type="project" value="FlyBase"/>
</dbReference>
<dbReference type="GO" id="GO:0007601">
    <property type="term" value="P:visual perception"/>
    <property type="evidence" value="ECO:0007669"/>
    <property type="project" value="UniProtKB-KW"/>
</dbReference>
<dbReference type="GO" id="GO:0042060">
    <property type="term" value="P:wound healing"/>
    <property type="evidence" value="ECO:0000315"/>
    <property type="project" value="FlyBase"/>
</dbReference>
<dbReference type="CDD" id="cd01870">
    <property type="entry name" value="RhoA_like"/>
    <property type="match status" value="1"/>
</dbReference>
<dbReference type="FunFam" id="3.40.50.300:FF:000095">
    <property type="entry name" value="Rho-related GTP-binding protein RhoC"/>
    <property type="match status" value="1"/>
</dbReference>
<dbReference type="Gene3D" id="3.40.50.300">
    <property type="entry name" value="P-loop containing nucleotide triphosphate hydrolases"/>
    <property type="match status" value="1"/>
</dbReference>
<dbReference type="InterPro" id="IPR027417">
    <property type="entry name" value="P-loop_NTPase"/>
</dbReference>
<dbReference type="InterPro" id="IPR005225">
    <property type="entry name" value="Small_GTP-bd"/>
</dbReference>
<dbReference type="InterPro" id="IPR001806">
    <property type="entry name" value="Small_GTPase"/>
</dbReference>
<dbReference type="InterPro" id="IPR003578">
    <property type="entry name" value="Small_GTPase_Rho"/>
</dbReference>
<dbReference type="NCBIfam" id="TIGR00231">
    <property type="entry name" value="small_GTP"/>
    <property type="match status" value="1"/>
</dbReference>
<dbReference type="PANTHER" id="PTHR24072">
    <property type="entry name" value="RHO FAMILY GTPASE"/>
    <property type="match status" value="1"/>
</dbReference>
<dbReference type="Pfam" id="PF00071">
    <property type="entry name" value="Ras"/>
    <property type="match status" value="1"/>
</dbReference>
<dbReference type="PRINTS" id="PR00449">
    <property type="entry name" value="RASTRNSFRMNG"/>
</dbReference>
<dbReference type="SMART" id="SM00175">
    <property type="entry name" value="RAB"/>
    <property type="match status" value="1"/>
</dbReference>
<dbReference type="SMART" id="SM00173">
    <property type="entry name" value="RAS"/>
    <property type="match status" value="1"/>
</dbReference>
<dbReference type="SMART" id="SM00174">
    <property type="entry name" value="RHO"/>
    <property type="match status" value="1"/>
</dbReference>
<dbReference type="SUPFAM" id="SSF52540">
    <property type="entry name" value="P-loop containing nucleoside triphosphate hydrolases"/>
    <property type="match status" value="1"/>
</dbReference>
<dbReference type="PROSITE" id="PS51420">
    <property type="entry name" value="RHO"/>
    <property type="match status" value="1"/>
</dbReference>
<keyword id="KW-0009">Actin-binding</keyword>
<keyword id="KW-1003">Cell membrane</keyword>
<keyword id="KW-0963">Cytoplasm</keyword>
<keyword id="KW-0206">Cytoskeleton</keyword>
<keyword id="KW-0217">Developmental protein</keyword>
<keyword id="KW-0342">GTP-binding</keyword>
<keyword id="KW-0449">Lipoprotein</keyword>
<keyword id="KW-0472">Membrane</keyword>
<keyword id="KW-0488">Methylation</keyword>
<keyword id="KW-0547">Nucleotide-binding</keyword>
<keyword id="KW-0636">Prenylation</keyword>
<keyword id="KW-1185">Reference proteome</keyword>
<keyword id="KW-0716">Sensory transduction</keyword>
<keyword id="KW-0844">Vision</keyword>
<feature type="chain" id="PRO_0000198885" description="Ras-like GTP-binding protein Rho1">
    <location>
        <begin position="1"/>
        <end position="189"/>
    </location>
</feature>
<feature type="propeptide" id="PRO_0000281238" description="Removed in mature form" evidence="1">
    <location>
        <begin position="190"/>
        <end position="192"/>
    </location>
</feature>
<feature type="short sequence motif" description="Effector region" evidence="2">
    <location>
        <begin position="34"/>
        <end position="42"/>
    </location>
</feature>
<feature type="binding site" evidence="1">
    <location>
        <begin position="12"/>
        <end position="19"/>
    </location>
    <ligand>
        <name>GTP</name>
        <dbReference type="ChEBI" id="CHEBI:37565"/>
    </ligand>
</feature>
<feature type="binding site" evidence="1">
    <location>
        <begin position="59"/>
        <end position="63"/>
    </location>
    <ligand>
        <name>GTP</name>
        <dbReference type="ChEBI" id="CHEBI:37565"/>
    </ligand>
</feature>
<feature type="binding site" evidence="1">
    <location>
        <begin position="117"/>
        <end position="120"/>
    </location>
    <ligand>
        <name>GTP</name>
        <dbReference type="ChEBI" id="CHEBI:37565"/>
    </ligand>
</feature>
<feature type="modified residue" description="Cysteine methyl ester" evidence="1">
    <location>
        <position position="189"/>
    </location>
</feature>
<feature type="lipid moiety-binding region" description="S-geranylgeranyl cysteine" evidence="1">
    <location>
        <position position="189"/>
    </location>
</feature>
<feature type="mutagenesis site" description="Reduces binding to wash. Reduces the number of hemocytes migrating anteriorly from the tail during embryogenesis." evidence="8">
    <original>KDQ</original>
    <variation>AAA</variation>
    <location>
        <begin position="27"/>
        <end position="29"/>
    </location>
</feature>
<feature type="mutagenesis site" description="No effect on binding to wash and no effect on tail hemocyte developmental migration from the tail." evidence="8">
    <original>F</original>
    <variation>V</variation>
    <location>
        <position position="39"/>
    </location>
</feature>
<feature type="mutagenesis site" description="No effect on binding to wash." evidence="8">
    <original>KQVE</original>
    <variation>AAAA</variation>
    <location>
        <begin position="51"/>
        <end position="54"/>
    </location>
</feature>